<reference key="1">
    <citation type="submission" date="2008-05" db="EMBL/GenBank/DDBJ databases">
        <title>Complete sequence of Rhodopseudomonas palustris TIE-1.</title>
        <authorList>
            <consortium name="US DOE Joint Genome Institute"/>
            <person name="Lucas S."/>
            <person name="Copeland A."/>
            <person name="Lapidus A."/>
            <person name="Glavina del Rio T."/>
            <person name="Dalin E."/>
            <person name="Tice H."/>
            <person name="Pitluck S."/>
            <person name="Chain P."/>
            <person name="Malfatti S."/>
            <person name="Shin M."/>
            <person name="Vergez L."/>
            <person name="Lang D."/>
            <person name="Schmutz J."/>
            <person name="Larimer F."/>
            <person name="Land M."/>
            <person name="Hauser L."/>
            <person name="Kyrpides N."/>
            <person name="Mikhailova N."/>
            <person name="Emerson D."/>
            <person name="Newman D.K."/>
            <person name="Roden E."/>
            <person name="Richardson P."/>
        </authorList>
    </citation>
    <scope>NUCLEOTIDE SEQUENCE [LARGE SCALE GENOMIC DNA]</scope>
    <source>
        <strain>TIE-1</strain>
    </source>
</reference>
<keyword id="KW-0067">ATP-binding</keyword>
<keyword id="KW-0963">Cytoplasm</keyword>
<keyword id="KW-0418">Kinase</keyword>
<keyword id="KW-0460">Magnesium</keyword>
<keyword id="KW-0479">Metal-binding</keyword>
<keyword id="KW-0546">Nucleotide metabolism</keyword>
<keyword id="KW-0547">Nucleotide-binding</keyword>
<keyword id="KW-0597">Phosphoprotein</keyword>
<keyword id="KW-0808">Transferase</keyword>
<protein>
    <recommendedName>
        <fullName evidence="1">Nucleoside diphosphate kinase</fullName>
        <shortName evidence="1">NDK</shortName>
        <shortName evidence="1">NDP kinase</shortName>
        <ecNumber evidence="1">2.7.4.6</ecNumber>
    </recommendedName>
    <alternativeName>
        <fullName evidence="1">Nucleoside-2-P kinase</fullName>
    </alternativeName>
</protein>
<gene>
    <name evidence="1" type="primary">ndk</name>
    <name type="ordered locus">Rpal_3466</name>
</gene>
<organism>
    <name type="scientific">Rhodopseudomonas palustris (strain TIE-1)</name>
    <dbReference type="NCBI Taxonomy" id="395960"/>
    <lineage>
        <taxon>Bacteria</taxon>
        <taxon>Pseudomonadati</taxon>
        <taxon>Pseudomonadota</taxon>
        <taxon>Alphaproteobacteria</taxon>
        <taxon>Hyphomicrobiales</taxon>
        <taxon>Nitrobacteraceae</taxon>
        <taxon>Rhodopseudomonas</taxon>
    </lineage>
</organism>
<accession>B3Q9R4</accession>
<proteinExistence type="inferred from homology"/>
<dbReference type="EC" id="2.7.4.6" evidence="1"/>
<dbReference type="EMBL" id="CP001096">
    <property type="protein sequence ID" value="ACF01967.1"/>
    <property type="molecule type" value="Genomic_DNA"/>
</dbReference>
<dbReference type="RefSeq" id="WP_011158602.1">
    <property type="nucleotide sequence ID" value="NC_011004.1"/>
</dbReference>
<dbReference type="SMR" id="B3Q9R4"/>
<dbReference type="GeneID" id="66894138"/>
<dbReference type="KEGG" id="rpt:Rpal_3466"/>
<dbReference type="HOGENOM" id="CLU_060216_8_1_5"/>
<dbReference type="OrthoDB" id="9801161at2"/>
<dbReference type="Proteomes" id="UP000001725">
    <property type="component" value="Chromosome"/>
</dbReference>
<dbReference type="GO" id="GO:0005737">
    <property type="term" value="C:cytoplasm"/>
    <property type="evidence" value="ECO:0007669"/>
    <property type="project" value="UniProtKB-SubCell"/>
</dbReference>
<dbReference type="GO" id="GO:0005524">
    <property type="term" value="F:ATP binding"/>
    <property type="evidence" value="ECO:0007669"/>
    <property type="project" value="UniProtKB-UniRule"/>
</dbReference>
<dbReference type="GO" id="GO:0046872">
    <property type="term" value="F:metal ion binding"/>
    <property type="evidence" value="ECO:0007669"/>
    <property type="project" value="UniProtKB-KW"/>
</dbReference>
<dbReference type="GO" id="GO:0004550">
    <property type="term" value="F:nucleoside diphosphate kinase activity"/>
    <property type="evidence" value="ECO:0007669"/>
    <property type="project" value="UniProtKB-UniRule"/>
</dbReference>
<dbReference type="GO" id="GO:0006241">
    <property type="term" value="P:CTP biosynthetic process"/>
    <property type="evidence" value="ECO:0007669"/>
    <property type="project" value="UniProtKB-UniRule"/>
</dbReference>
<dbReference type="GO" id="GO:0006183">
    <property type="term" value="P:GTP biosynthetic process"/>
    <property type="evidence" value="ECO:0007669"/>
    <property type="project" value="UniProtKB-UniRule"/>
</dbReference>
<dbReference type="GO" id="GO:0006228">
    <property type="term" value="P:UTP biosynthetic process"/>
    <property type="evidence" value="ECO:0007669"/>
    <property type="project" value="UniProtKB-UniRule"/>
</dbReference>
<dbReference type="CDD" id="cd04413">
    <property type="entry name" value="NDPk_I"/>
    <property type="match status" value="1"/>
</dbReference>
<dbReference type="Gene3D" id="3.30.70.141">
    <property type="entry name" value="Nucleoside diphosphate kinase-like domain"/>
    <property type="match status" value="1"/>
</dbReference>
<dbReference type="HAMAP" id="MF_00451">
    <property type="entry name" value="NDP_kinase"/>
    <property type="match status" value="1"/>
</dbReference>
<dbReference type="InterPro" id="IPR034907">
    <property type="entry name" value="NDK-like_dom"/>
</dbReference>
<dbReference type="InterPro" id="IPR036850">
    <property type="entry name" value="NDK-like_dom_sf"/>
</dbReference>
<dbReference type="InterPro" id="IPR001564">
    <property type="entry name" value="Nucleoside_diP_kinase"/>
</dbReference>
<dbReference type="NCBIfam" id="NF001908">
    <property type="entry name" value="PRK00668.1"/>
    <property type="match status" value="1"/>
</dbReference>
<dbReference type="PANTHER" id="PTHR46161">
    <property type="entry name" value="NUCLEOSIDE DIPHOSPHATE KINASE"/>
    <property type="match status" value="1"/>
</dbReference>
<dbReference type="PANTHER" id="PTHR46161:SF3">
    <property type="entry name" value="NUCLEOSIDE DIPHOSPHATE KINASE DDB_G0292928-RELATED"/>
    <property type="match status" value="1"/>
</dbReference>
<dbReference type="Pfam" id="PF00334">
    <property type="entry name" value="NDK"/>
    <property type="match status" value="1"/>
</dbReference>
<dbReference type="PRINTS" id="PR01243">
    <property type="entry name" value="NUCDPKINASE"/>
</dbReference>
<dbReference type="SMART" id="SM00562">
    <property type="entry name" value="NDK"/>
    <property type="match status" value="1"/>
</dbReference>
<dbReference type="SUPFAM" id="SSF54919">
    <property type="entry name" value="Nucleoside diphosphate kinase, NDK"/>
    <property type="match status" value="1"/>
</dbReference>
<dbReference type="PROSITE" id="PS51374">
    <property type="entry name" value="NDPK_LIKE"/>
    <property type="match status" value="1"/>
</dbReference>
<comment type="function">
    <text evidence="1">Major role in the synthesis of nucleoside triphosphates other than ATP. The ATP gamma phosphate is transferred to the NDP beta phosphate via a ping-pong mechanism, using a phosphorylated active-site intermediate.</text>
</comment>
<comment type="catalytic activity">
    <reaction evidence="1">
        <text>a 2'-deoxyribonucleoside 5'-diphosphate + ATP = a 2'-deoxyribonucleoside 5'-triphosphate + ADP</text>
        <dbReference type="Rhea" id="RHEA:44640"/>
        <dbReference type="ChEBI" id="CHEBI:30616"/>
        <dbReference type="ChEBI" id="CHEBI:61560"/>
        <dbReference type="ChEBI" id="CHEBI:73316"/>
        <dbReference type="ChEBI" id="CHEBI:456216"/>
        <dbReference type="EC" id="2.7.4.6"/>
    </reaction>
</comment>
<comment type="catalytic activity">
    <reaction evidence="1">
        <text>a ribonucleoside 5'-diphosphate + ATP = a ribonucleoside 5'-triphosphate + ADP</text>
        <dbReference type="Rhea" id="RHEA:18113"/>
        <dbReference type="ChEBI" id="CHEBI:30616"/>
        <dbReference type="ChEBI" id="CHEBI:57930"/>
        <dbReference type="ChEBI" id="CHEBI:61557"/>
        <dbReference type="ChEBI" id="CHEBI:456216"/>
        <dbReference type="EC" id="2.7.4.6"/>
    </reaction>
</comment>
<comment type="cofactor">
    <cofactor evidence="1">
        <name>Mg(2+)</name>
        <dbReference type="ChEBI" id="CHEBI:18420"/>
    </cofactor>
</comment>
<comment type="subunit">
    <text evidence="1">Homotetramer.</text>
</comment>
<comment type="subcellular location">
    <subcellularLocation>
        <location evidence="1">Cytoplasm</location>
    </subcellularLocation>
</comment>
<comment type="similarity">
    <text evidence="1">Belongs to the NDK family.</text>
</comment>
<sequence length="140" mass="15219">MAIERTFSILKPDATERNITGAINALIEKAGLRIVAQKRIRMTRDQAETFYAVHKERPFFGELVDFMISGPVVVQVLEGEGAIAKYRDVMGATDPSKAADGTIRKLHAKSIGENSVHGSDAAETAKIEIAQFFSGNEIVG</sequence>
<feature type="chain" id="PRO_1000125008" description="Nucleoside diphosphate kinase">
    <location>
        <begin position="1"/>
        <end position="140"/>
    </location>
</feature>
<feature type="active site" description="Pros-phosphohistidine intermediate" evidence="1">
    <location>
        <position position="117"/>
    </location>
</feature>
<feature type="binding site" evidence="1">
    <location>
        <position position="11"/>
    </location>
    <ligand>
        <name>ATP</name>
        <dbReference type="ChEBI" id="CHEBI:30616"/>
    </ligand>
</feature>
<feature type="binding site" evidence="1">
    <location>
        <position position="59"/>
    </location>
    <ligand>
        <name>ATP</name>
        <dbReference type="ChEBI" id="CHEBI:30616"/>
    </ligand>
</feature>
<feature type="binding site" evidence="1">
    <location>
        <position position="87"/>
    </location>
    <ligand>
        <name>ATP</name>
        <dbReference type="ChEBI" id="CHEBI:30616"/>
    </ligand>
</feature>
<feature type="binding site" evidence="1">
    <location>
        <position position="93"/>
    </location>
    <ligand>
        <name>ATP</name>
        <dbReference type="ChEBI" id="CHEBI:30616"/>
    </ligand>
</feature>
<feature type="binding site" evidence="1">
    <location>
        <position position="104"/>
    </location>
    <ligand>
        <name>ATP</name>
        <dbReference type="ChEBI" id="CHEBI:30616"/>
    </ligand>
</feature>
<feature type="binding site" evidence="1">
    <location>
        <position position="114"/>
    </location>
    <ligand>
        <name>ATP</name>
        <dbReference type="ChEBI" id="CHEBI:30616"/>
    </ligand>
</feature>
<name>NDK_RHOPT</name>
<evidence type="ECO:0000255" key="1">
    <source>
        <dbReference type="HAMAP-Rule" id="MF_00451"/>
    </source>
</evidence>